<protein>
    <recommendedName>
        <fullName>Zinc finger protein 674</fullName>
    </recommendedName>
</protein>
<reference key="1">
    <citation type="journal article" date="2006" name="Am. J. Hum. Genet.">
        <title>ZNF674: a new Kruppel-associated box-containing zinc-finger gene involved in nonsyndromic X-linked mental retardation.</title>
        <authorList>
            <person name="Lugtenberg D."/>
            <person name="Yntema H.G."/>
            <person name="Banning M.J.G."/>
            <person name="Oudakker A.R."/>
            <person name="Firth H.V."/>
            <person name="Willatt L."/>
            <person name="Raynaud M."/>
            <person name="Kleefstra T."/>
            <person name="Fryns J.-P."/>
            <person name="Ropers H.-H."/>
            <person name="Chelly J."/>
            <person name="Moraine C."/>
            <person name="Gecz J."/>
            <person name="van Reeuwijk J."/>
            <person name="Nabuurs S.B."/>
            <person name="de Vries B.B.A."/>
            <person name="Hamel B.C.J."/>
            <person name="de Brouwer A.P.M."/>
            <person name="van Bokhoven H."/>
        </authorList>
    </citation>
    <scope>NUCLEOTIDE SEQUENCE [MRNA] (ISOFORM 1)</scope>
    <scope>TISSUE SPECIFICITY</scope>
    <scope>DEVELOPMENTAL STAGE</scope>
    <scope>VARIANTS MET-343 AND LEU-412</scope>
    <scope>POSSIBLE ASSOCIATION OF VARIANT LEU-412 WITH X-LINKED INTELLECTUAL DISABILITY</scope>
</reference>
<reference key="2">
    <citation type="journal article" date="2004" name="Nat. Genet.">
        <title>Complete sequencing and characterization of 21,243 full-length human cDNAs.</title>
        <authorList>
            <person name="Ota T."/>
            <person name="Suzuki Y."/>
            <person name="Nishikawa T."/>
            <person name="Otsuki T."/>
            <person name="Sugiyama T."/>
            <person name="Irie R."/>
            <person name="Wakamatsu A."/>
            <person name="Hayashi K."/>
            <person name="Sato H."/>
            <person name="Nagai K."/>
            <person name="Kimura K."/>
            <person name="Makita H."/>
            <person name="Sekine M."/>
            <person name="Obayashi M."/>
            <person name="Nishi T."/>
            <person name="Shibahara T."/>
            <person name="Tanaka T."/>
            <person name="Ishii S."/>
            <person name="Yamamoto J."/>
            <person name="Saito K."/>
            <person name="Kawai Y."/>
            <person name="Isono Y."/>
            <person name="Nakamura Y."/>
            <person name="Nagahari K."/>
            <person name="Murakami K."/>
            <person name="Yasuda T."/>
            <person name="Iwayanagi T."/>
            <person name="Wagatsuma M."/>
            <person name="Shiratori A."/>
            <person name="Sudo H."/>
            <person name="Hosoiri T."/>
            <person name="Kaku Y."/>
            <person name="Kodaira H."/>
            <person name="Kondo H."/>
            <person name="Sugawara M."/>
            <person name="Takahashi M."/>
            <person name="Kanda K."/>
            <person name="Yokoi T."/>
            <person name="Furuya T."/>
            <person name="Kikkawa E."/>
            <person name="Omura Y."/>
            <person name="Abe K."/>
            <person name="Kamihara K."/>
            <person name="Katsuta N."/>
            <person name="Sato K."/>
            <person name="Tanikawa M."/>
            <person name="Yamazaki M."/>
            <person name="Ninomiya K."/>
            <person name="Ishibashi T."/>
            <person name="Yamashita H."/>
            <person name="Murakawa K."/>
            <person name="Fujimori K."/>
            <person name="Tanai H."/>
            <person name="Kimata M."/>
            <person name="Watanabe M."/>
            <person name="Hiraoka S."/>
            <person name="Chiba Y."/>
            <person name="Ishida S."/>
            <person name="Ono Y."/>
            <person name="Takiguchi S."/>
            <person name="Watanabe S."/>
            <person name="Yosida M."/>
            <person name="Hotuta T."/>
            <person name="Kusano J."/>
            <person name="Kanehori K."/>
            <person name="Takahashi-Fujii A."/>
            <person name="Hara H."/>
            <person name="Tanase T.-O."/>
            <person name="Nomura Y."/>
            <person name="Togiya S."/>
            <person name="Komai F."/>
            <person name="Hara R."/>
            <person name="Takeuchi K."/>
            <person name="Arita M."/>
            <person name="Imose N."/>
            <person name="Musashino K."/>
            <person name="Yuuki H."/>
            <person name="Oshima A."/>
            <person name="Sasaki N."/>
            <person name="Aotsuka S."/>
            <person name="Yoshikawa Y."/>
            <person name="Matsunawa H."/>
            <person name="Ichihara T."/>
            <person name="Shiohata N."/>
            <person name="Sano S."/>
            <person name="Moriya S."/>
            <person name="Momiyama H."/>
            <person name="Satoh N."/>
            <person name="Takami S."/>
            <person name="Terashima Y."/>
            <person name="Suzuki O."/>
            <person name="Nakagawa S."/>
            <person name="Senoh A."/>
            <person name="Mizoguchi H."/>
            <person name="Goto Y."/>
            <person name="Shimizu F."/>
            <person name="Wakebe H."/>
            <person name="Hishigaki H."/>
            <person name="Watanabe T."/>
            <person name="Sugiyama A."/>
            <person name="Takemoto M."/>
            <person name="Kawakami B."/>
            <person name="Yamazaki M."/>
            <person name="Watanabe K."/>
            <person name="Kumagai A."/>
            <person name="Itakura S."/>
            <person name="Fukuzumi Y."/>
            <person name="Fujimori Y."/>
            <person name="Komiyama M."/>
            <person name="Tashiro H."/>
            <person name="Tanigami A."/>
            <person name="Fujiwara T."/>
            <person name="Ono T."/>
            <person name="Yamada K."/>
            <person name="Fujii Y."/>
            <person name="Ozaki K."/>
            <person name="Hirao M."/>
            <person name="Ohmori Y."/>
            <person name="Kawabata A."/>
            <person name="Hikiji T."/>
            <person name="Kobatake N."/>
            <person name="Inagaki H."/>
            <person name="Ikema Y."/>
            <person name="Okamoto S."/>
            <person name="Okitani R."/>
            <person name="Kawakami T."/>
            <person name="Noguchi S."/>
            <person name="Itoh T."/>
            <person name="Shigeta K."/>
            <person name="Senba T."/>
            <person name="Matsumura K."/>
            <person name="Nakajima Y."/>
            <person name="Mizuno T."/>
            <person name="Morinaga M."/>
            <person name="Sasaki M."/>
            <person name="Togashi T."/>
            <person name="Oyama M."/>
            <person name="Hata H."/>
            <person name="Watanabe M."/>
            <person name="Komatsu T."/>
            <person name="Mizushima-Sugano J."/>
            <person name="Satoh T."/>
            <person name="Shirai Y."/>
            <person name="Takahashi Y."/>
            <person name="Nakagawa K."/>
            <person name="Okumura K."/>
            <person name="Nagase T."/>
            <person name="Nomura N."/>
            <person name="Kikuchi H."/>
            <person name="Masuho Y."/>
            <person name="Yamashita R."/>
            <person name="Nakai K."/>
            <person name="Yada T."/>
            <person name="Nakamura Y."/>
            <person name="Ohara O."/>
            <person name="Isogai T."/>
            <person name="Sugano S."/>
        </authorList>
    </citation>
    <scope>NUCLEOTIDE SEQUENCE [LARGE SCALE MRNA] (ISOFORM 2)</scope>
    <source>
        <tissue>Brain</tissue>
    </source>
</reference>
<reference key="3">
    <citation type="journal article" date="2005" name="Nature">
        <title>The DNA sequence of the human X chromosome.</title>
        <authorList>
            <person name="Ross M.T."/>
            <person name="Grafham D.V."/>
            <person name="Coffey A.J."/>
            <person name="Scherer S."/>
            <person name="McLay K."/>
            <person name="Muzny D."/>
            <person name="Platzer M."/>
            <person name="Howell G.R."/>
            <person name="Burrows C."/>
            <person name="Bird C.P."/>
            <person name="Frankish A."/>
            <person name="Lovell F.L."/>
            <person name="Howe K.L."/>
            <person name="Ashurst J.L."/>
            <person name="Fulton R.S."/>
            <person name="Sudbrak R."/>
            <person name="Wen G."/>
            <person name="Jones M.C."/>
            <person name="Hurles M.E."/>
            <person name="Andrews T.D."/>
            <person name="Scott C.E."/>
            <person name="Searle S."/>
            <person name="Ramser J."/>
            <person name="Whittaker A."/>
            <person name="Deadman R."/>
            <person name="Carter N.P."/>
            <person name="Hunt S.E."/>
            <person name="Chen R."/>
            <person name="Cree A."/>
            <person name="Gunaratne P."/>
            <person name="Havlak P."/>
            <person name="Hodgson A."/>
            <person name="Metzker M.L."/>
            <person name="Richards S."/>
            <person name="Scott G."/>
            <person name="Steffen D."/>
            <person name="Sodergren E."/>
            <person name="Wheeler D.A."/>
            <person name="Worley K.C."/>
            <person name="Ainscough R."/>
            <person name="Ambrose K.D."/>
            <person name="Ansari-Lari M.A."/>
            <person name="Aradhya S."/>
            <person name="Ashwell R.I."/>
            <person name="Babbage A.K."/>
            <person name="Bagguley C.L."/>
            <person name="Ballabio A."/>
            <person name="Banerjee R."/>
            <person name="Barker G.E."/>
            <person name="Barlow K.F."/>
            <person name="Barrett I.P."/>
            <person name="Bates K.N."/>
            <person name="Beare D.M."/>
            <person name="Beasley H."/>
            <person name="Beasley O."/>
            <person name="Beck A."/>
            <person name="Bethel G."/>
            <person name="Blechschmidt K."/>
            <person name="Brady N."/>
            <person name="Bray-Allen S."/>
            <person name="Bridgeman A.M."/>
            <person name="Brown A.J."/>
            <person name="Brown M.J."/>
            <person name="Bonnin D."/>
            <person name="Bruford E.A."/>
            <person name="Buhay C."/>
            <person name="Burch P."/>
            <person name="Burford D."/>
            <person name="Burgess J."/>
            <person name="Burrill W."/>
            <person name="Burton J."/>
            <person name="Bye J.M."/>
            <person name="Carder C."/>
            <person name="Carrel L."/>
            <person name="Chako J."/>
            <person name="Chapman J.C."/>
            <person name="Chavez D."/>
            <person name="Chen E."/>
            <person name="Chen G."/>
            <person name="Chen Y."/>
            <person name="Chen Z."/>
            <person name="Chinault C."/>
            <person name="Ciccodicola A."/>
            <person name="Clark S.Y."/>
            <person name="Clarke G."/>
            <person name="Clee C.M."/>
            <person name="Clegg S."/>
            <person name="Clerc-Blankenburg K."/>
            <person name="Clifford K."/>
            <person name="Cobley V."/>
            <person name="Cole C.G."/>
            <person name="Conquer J.S."/>
            <person name="Corby N."/>
            <person name="Connor R.E."/>
            <person name="David R."/>
            <person name="Davies J."/>
            <person name="Davis C."/>
            <person name="Davis J."/>
            <person name="Delgado O."/>
            <person name="Deshazo D."/>
            <person name="Dhami P."/>
            <person name="Ding Y."/>
            <person name="Dinh H."/>
            <person name="Dodsworth S."/>
            <person name="Draper H."/>
            <person name="Dugan-Rocha S."/>
            <person name="Dunham A."/>
            <person name="Dunn M."/>
            <person name="Durbin K.J."/>
            <person name="Dutta I."/>
            <person name="Eades T."/>
            <person name="Ellwood M."/>
            <person name="Emery-Cohen A."/>
            <person name="Errington H."/>
            <person name="Evans K.L."/>
            <person name="Faulkner L."/>
            <person name="Francis F."/>
            <person name="Frankland J."/>
            <person name="Fraser A.E."/>
            <person name="Galgoczy P."/>
            <person name="Gilbert J."/>
            <person name="Gill R."/>
            <person name="Gloeckner G."/>
            <person name="Gregory S.G."/>
            <person name="Gribble S."/>
            <person name="Griffiths C."/>
            <person name="Grocock R."/>
            <person name="Gu Y."/>
            <person name="Gwilliam R."/>
            <person name="Hamilton C."/>
            <person name="Hart E.A."/>
            <person name="Hawes A."/>
            <person name="Heath P.D."/>
            <person name="Heitmann K."/>
            <person name="Hennig S."/>
            <person name="Hernandez J."/>
            <person name="Hinzmann B."/>
            <person name="Ho S."/>
            <person name="Hoffs M."/>
            <person name="Howden P.J."/>
            <person name="Huckle E.J."/>
            <person name="Hume J."/>
            <person name="Hunt P.J."/>
            <person name="Hunt A.R."/>
            <person name="Isherwood J."/>
            <person name="Jacob L."/>
            <person name="Johnson D."/>
            <person name="Jones S."/>
            <person name="de Jong P.J."/>
            <person name="Joseph S.S."/>
            <person name="Keenan S."/>
            <person name="Kelly S."/>
            <person name="Kershaw J.K."/>
            <person name="Khan Z."/>
            <person name="Kioschis P."/>
            <person name="Klages S."/>
            <person name="Knights A.J."/>
            <person name="Kosiura A."/>
            <person name="Kovar-Smith C."/>
            <person name="Laird G.K."/>
            <person name="Langford C."/>
            <person name="Lawlor S."/>
            <person name="Leversha M."/>
            <person name="Lewis L."/>
            <person name="Liu W."/>
            <person name="Lloyd C."/>
            <person name="Lloyd D.M."/>
            <person name="Loulseged H."/>
            <person name="Loveland J.E."/>
            <person name="Lovell J.D."/>
            <person name="Lozado R."/>
            <person name="Lu J."/>
            <person name="Lyne R."/>
            <person name="Ma J."/>
            <person name="Maheshwari M."/>
            <person name="Matthews L.H."/>
            <person name="McDowall J."/>
            <person name="McLaren S."/>
            <person name="McMurray A."/>
            <person name="Meidl P."/>
            <person name="Meitinger T."/>
            <person name="Milne S."/>
            <person name="Miner G."/>
            <person name="Mistry S.L."/>
            <person name="Morgan M."/>
            <person name="Morris S."/>
            <person name="Mueller I."/>
            <person name="Mullikin J.C."/>
            <person name="Nguyen N."/>
            <person name="Nordsiek G."/>
            <person name="Nyakatura G."/>
            <person name="O'dell C.N."/>
            <person name="Okwuonu G."/>
            <person name="Palmer S."/>
            <person name="Pandian R."/>
            <person name="Parker D."/>
            <person name="Parrish J."/>
            <person name="Pasternak S."/>
            <person name="Patel D."/>
            <person name="Pearce A.V."/>
            <person name="Pearson D.M."/>
            <person name="Pelan S.E."/>
            <person name="Perez L."/>
            <person name="Porter K.M."/>
            <person name="Ramsey Y."/>
            <person name="Reichwald K."/>
            <person name="Rhodes S."/>
            <person name="Ridler K.A."/>
            <person name="Schlessinger D."/>
            <person name="Schueler M.G."/>
            <person name="Sehra H.K."/>
            <person name="Shaw-Smith C."/>
            <person name="Shen H."/>
            <person name="Sheridan E.M."/>
            <person name="Shownkeen R."/>
            <person name="Skuce C.D."/>
            <person name="Smith M.L."/>
            <person name="Sotheran E.C."/>
            <person name="Steingruber H.E."/>
            <person name="Steward C.A."/>
            <person name="Storey R."/>
            <person name="Swann R.M."/>
            <person name="Swarbreck D."/>
            <person name="Tabor P.E."/>
            <person name="Taudien S."/>
            <person name="Taylor T."/>
            <person name="Teague B."/>
            <person name="Thomas K."/>
            <person name="Thorpe A."/>
            <person name="Timms K."/>
            <person name="Tracey A."/>
            <person name="Trevanion S."/>
            <person name="Tromans A.C."/>
            <person name="d'Urso M."/>
            <person name="Verduzco D."/>
            <person name="Villasana D."/>
            <person name="Waldron L."/>
            <person name="Wall M."/>
            <person name="Wang Q."/>
            <person name="Warren J."/>
            <person name="Warry G.L."/>
            <person name="Wei X."/>
            <person name="West A."/>
            <person name="Whitehead S.L."/>
            <person name="Whiteley M.N."/>
            <person name="Wilkinson J.E."/>
            <person name="Willey D.L."/>
            <person name="Williams G."/>
            <person name="Williams L."/>
            <person name="Williamson A."/>
            <person name="Williamson H."/>
            <person name="Wilming L."/>
            <person name="Woodmansey R.L."/>
            <person name="Wray P.W."/>
            <person name="Yen J."/>
            <person name="Zhang J."/>
            <person name="Zhou J."/>
            <person name="Zoghbi H."/>
            <person name="Zorilla S."/>
            <person name="Buck D."/>
            <person name="Reinhardt R."/>
            <person name="Poustka A."/>
            <person name="Rosenthal A."/>
            <person name="Lehrach H."/>
            <person name="Meindl A."/>
            <person name="Minx P.J."/>
            <person name="Hillier L.W."/>
            <person name="Willard H.F."/>
            <person name="Wilson R.K."/>
            <person name="Waterston R.H."/>
            <person name="Rice C.M."/>
            <person name="Vaudin M."/>
            <person name="Coulson A."/>
            <person name="Nelson D.L."/>
            <person name="Weinstock G."/>
            <person name="Sulston J.E."/>
            <person name="Durbin R.M."/>
            <person name="Hubbard T."/>
            <person name="Gibbs R.A."/>
            <person name="Beck S."/>
            <person name="Rogers J."/>
            <person name="Bentley D.R."/>
        </authorList>
    </citation>
    <scope>NUCLEOTIDE SEQUENCE [LARGE SCALE GENOMIC DNA]</scope>
</reference>
<reference key="4">
    <citation type="journal article" date="2013" name="Am. J. Hum. Genet.">
        <title>XLID-causing mutations and associated genes challenged in light of data from large-scale human exome sequencing.</title>
        <authorList>
            <person name="Piton A."/>
            <person name="Redin C."/>
            <person name="Mandel J.L."/>
        </authorList>
    </citation>
    <scope>LACK OF ASSOCIATION OF VARIANT LEU-412 WITH X-LINKED INTELLECTUAL DISABILITY</scope>
</reference>
<organism>
    <name type="scientific">Homo sapiens</name>
    <name type="common">Human</name>
    <dbReference type="NCBI Taxonomy" id="9606"/>
    <lineage>
        <taxon>Eukaryota</taxon>
        <taxon>Metazoa</taxon>
        <taxon>Chordata</taxon>
        <taxon>Craniata</taxon>
        <taxon>Vertebrata</taxon>
        <taxon>Euteleostomi</taxon>
        <taxon>Mammalia</taxon>
        <taxon>Eutheria</taxon>
        <taxon>Euarchontoglires</taxon>
        <taxon>Primates</taxon>
        <taxon>Haplorrhini</taxon>
        <taxon>Catarrhini</taxon>
        <taxon>Hominidae</taxon>
        <taxon>Homo</taxon>
    </lineage>
</organism>
<name>ZN674_HUMAN</name>
<keyword id="KW-0025">Alternative splicing</keyword>
<keyword id="KW-0238">DNA-binding</keyword>
<keyword id="KW-0479">Metal-binding</keyword>
<keyword id="KW-0539">Nucleus</keyword>
<keyword id="KW-1267">Proteomics identification</keyword>
<keyword id="KW-1185">Reference proteome</keyword>
<keyword id="KW-0677">Repeat</keyword>
<keyword id="KW-0804">Transcription</keyword>
<keyword id="KW-0805">Transcription regulation</keyword>
<keyword id="KW-0862">Zinc</keyword>
<keyword id="KW-0863">Zinc-finger</keyword>
<evidence type="ECO:0000255" key="1">
    <source>
        <dbReference type="PROSITE-ProRule" id="PRU00042"/>
    </source>
</evidence>
<evidence type="ECO:0000255" key="2">
    <source>
        <dbReference type="PROSITE-ProRule" id="PRU00119"/>
    </source>
</evidence>
<evidence type="ECO:0000256" key="3">
    <source>
        <dbReference type="SAM" id="MobiDB-lite"/>
    </source>
</evidence>
<evidence type="ECO:0000269" key="4">
    <source>
    </source>
</evidence>
<evidence type="ECO:0000303" key="5">
    <source>
    </source>
</evidence>
<evidence type="ECO:0000305" key="6"/>
<evidence type="ECO:0000305" key="7">
    <source>
    </source>
</evidence>
<evidence type="ECO:0000305" key="8">
    <source>
    </source>
</evidence>
<gene>
    <name type="primary">ZNF674</name>
</gene>
<dbReference type="EMBL" id="AY971607">
    <property type="protein sequence ID" value="AAY40800.1"/>
    <property type="molecule type" value="mRNA"/>
</dbReference>
<dbReference type="EMBL" id="AK295054">
    <property type="protein sequence ID" value="BAG58103.1"/>
    <property type="molecule type" value="mRNA"/>
</dbReference>
<dbReference type="EMBL" id="AL022165">
    <property type="status" value="NOT_ANNOTATED_CDS"/>
    <property type="molecule type" value="Genomic_DNA"/>
</dbReference>
<dbReference type="EMBL" id="AL031393">
    <property type="status" value="NOT_ANNOTATED_CDS"/>
    <property type="molecule type" value="Genomic_DNA"/>
</dbReference>
<dbReference type="CCDS" id="CCDS48099.1">
    <molecule id="Q2M3X9-1"/>
</dbReference>
<dbReference type="CCDS" id="CCDS55406.1">
    <molecule id="Q2M3X9-2"/>
</dbReference>
<dbReference type="RefSeq" id="NP_001034980.1">
    <molecule id="Q2M3X9-1"/>
    <property type="nucleotide sequence ID" value="NM_001039891.3"/>
</dbReference>
<dbReference type="RefSeq" id="NP_001139763.1">
    <molecule id="Q2M3X9-2"/>
    <property type="nucleotide sequence ID" value="NM_001146291.2"/>
</dbReference>
<dbReference type="RefSeq" id="NP_001177346.1">
    <property type="nucleotide sequence ID" value="NM_001190417.1"/>
</dbReference>
<dbReference type="RefSeq" id="XP_011542243.1">
    <property type="nucleotide sequence ID" value="XM_011543941.2"/>
</dbReference>
<dbReference type="SMR" id="Q2M3X9"/>
<dbReference type="BioGRID" id="534961">
    <property type="interactions" value="8"/>
</dbReference>
<dbReference type="FunCoup" id="Q2M3X9">
    <property type="interactions" value="25"/>
</dbReference>
<dbReference type="IntAct" id="Q2M3X9">
    <property type="interactions" value="7"/>
</dbReference>
<dbReference type="STRING" id="9606.ENSP00000429148"/>
<dbReference type="iPTMnet" id="Q2M3X9"/>
<dbReference type="PhosphoSitePlus" id="Q2M3X9"/>
<dbReference type="BioMuta" id="ZNF674"/>
<dbReference type="DMDM" id="94730686"/>
<dbReference type="jPOST" id="Q2M3X9"/>
<dbReference type="MassIVE" id="Q2M3X9"/>
<dbReference type="PaxDb" id="9606-ENSP00000429148"/>
<dbReference type="PeptideAtlas" id="Q2M3X9"/>
<dbReference type="Antibodypedia" id="47866">
    <property type="antibodies" value="88 antibodies from 18 providers"/>
</dbReference>
<dbReference type="DNASU" id="641339"/>
<dbReference type="Ensembl" id="ENST00000414387.6">
    <molecule id="Q2M3X9-2"/>
    <property type="protein sequence ID" value="ENSP00000428248.1"/>
    <property type="gene ID" value="ENSG00000251192.8"/>
</dbReference>
<dbReference type="Ensembl" id="ENST00000523374.5">
    <molecule id="Q2M3X9-1"/>
    <property type="protein sequence ID" value="ENSP00000429148.1"/>
    <property type="gene ID" value="ENSG00000251192.8"/>
</dbReference>
<dbReference type="GeneID" id="641339"/>
<dbReference type="KEGG" id="hsa:641339"/>
<dbReference type="UCSC" id="uc004dgr.4">
    <molecule id="Q2M3X9-1"/>
    <property type="organism name" value="human"/>
</dbReference>
<dbReference type="AGR" id="HGNC:17625"/>
<dbReference type="CTD" id="641339"/>
<dbReference type="DisGeNET" id="641339"/>
<dbReference type="GeneCards" id="ZNF674"/>
<dbReference type="HGNC" id="HGNC:17625">
    <property type="gene designation" value="ZNF674"/>
</dbReference>
<dbReference type="HPA" id="ENSG00000251192">
    <property type="expression patterns" value="Low tissue specificity"/>
</dbReference>
<dbReference type="MalaCards" id="ZNF674"/>
<dbReference type="MIM" id="300573">
    <property type="type" value="gene"/>
</dbReference>
<dbReference type="neXtProt" id="NX_Q2M3X9"/>
<dbReference type="OpenTargets" id="ENSG00000251192"/>
<dbReference type="PharmGKB" id="PA142670475"/>
<dbReference type="VEuPathDB" id="HostDB:ENSG00000251192"/>
<dbReference type="eggNOG" id="KOG1721">
    <property type="taxonomic scope" value="Eukaryota"/>
</dbReference>
<dbReference type="GeneTree" id="ENSGT00940000162233"/>
<dbReference type="HOGENOM" id="CLU_002678_44_5_1"/>
<dbReference type="InParanoid" id="Q2M3X9"/>
<dbReference type="OMA" id="PGEKFFE"/>
<dbReference type="OrthoDB" id="9511883at2759"/>
<dbReference type="PAN-GO" id="Q2M3X9">
    <property type="GO annotations" value="3 GO annotations based on evolutionary models"/>
</dbReference>
<dbReference type="PhylomeDB" id="Q2M3X9"/>
<dbReference type="TreeFam" id="TF337898"/>
<dbReference type="PathwayCommons" id="Q2M3X9"/>
<dbReference type="SignaLink" id="Q2M3X9"/>
<dbReference type="BioGRID-ORCS" id="641339">
    <property type="hits" value="22 hits in 793 CRISPR screens"/>
</dbReference>
<dbReference type="ChiTaRS" id="ZNF674">
    <property type="organism name" value="human"/>
</dbReference>
<dbReference type="GenomeRNAi" id="641339"/>
<dbReference type="Pharos" id="Q2M3X9">
    <property type="development level" value="Tdark"/>
</dbReference>
<dbReference type="PRO" id="PR:Q2M3X9"/>
<dbReference type="Proteomes" id="UP000005640">
    <property type="component" value="Chromosome X"/>
</dbReference>
<dbReference type="RNAct" id="Q2M3X9">
    <property type="molecule type" value="protein"/>
</dbReference>
<dbReference type="Bgee" id="ENSG00000251192">
    <property type="expression patterns" value="Expressed in primordial germ cell in gonad and 99 other cell types or tissues"/>
</dbReference>
<dbReference type="ExpressionAtlas" id="Q2M3X9">
    <property type="expression patterns" value="baseline and differential"/>
</dbReference>
<dbReference type="GO" id="GO:0005634">
    <property type="term" value="C:nucleus"/>
    <property type="evidence" value="ECO:0000318"/>
    <property type="project" value="GO_Central"/>
</dbReference>
<dbReference type="GO" id="GO:0000981">
    <property type="term" value="F:DNA-binding transcription factor activity, RNA polymerase II-specific"/>
    <property type="evidence" value="ECO:0000318"/>
    <property type="project" value="GO_Central"/>
</dbReference>
<dbReference type="GO" id="GO:0000977">
    <property type="term" value="F:RNA polymerase II transcription regulatory region sequence-specific DNA binding"/>
    <property type="evidence" value="ECO:0000318"/>
    <property type="project" value="GO_Central"/>
</dbReference>
<dbReference type="GO" id="GO:0008270">
    <property type="term" value="F:zinc ion binding"/>
    <property type="evidence" value="ECO:0007669"/>
    <property type="project" value="UniProtKB-KW"/>
</dbReference>
<dbReference type="GO" id="GO:0006357">
    <property type="term" value="P:regulation of transcription by RNA polymerase II"/>
    <property type="evidence" value="ECO:0000318"/>
    <property type="project" value="GO_Central"/>
</dbReference>
<dbReference type="CDD" id="cd07765">
    <property type="entry name" value="KRAB_A-box"/>
    <property type="match status" value="1"/>
</dbReference>
<dbReference type="FunFam" id="3.30.160.60:FF:004137">
    <property type="match status" value="1"/>
</dbReference>
<dbReference type="FunFam" id="3.30.160.60:FF:000555">
    <property type="entry name" value="Zinc finger protein 1 homolog"/>
    <property type="match status" value="1"/>
</dbReference>
<dbReference type="FunFam" id="3.30.160.60:FF:001530">
    <property type="entry name" value="Zinc finger protein 268"/>
    <property type="match status" value="1"/>
</dbReference>
<dbReference type="FunFam" id="3.30.160.60:FF:002343">
    <property type="entry name" value="Zinc finger protein 33A"/>
    <property type="match status" value="1"/>
</dbReference>
<dbReference type="FunFam" id="3.30.160.60:FF:002402">
    <property type="entry name" value="Zinc finger protein 347"/>
    <property type="match status" value="1"/>
</dbReference>
<dbReference type="FunFam" id="3.30.160.60:FF:000848">
    <property type="entry name" value="Zinc finger protein 35"/>
    <property type="match status" value="1"/>
</dbReference>
<dbReference type="FunFam" id="3.30.160.60:FF:000127">
    <property type="entry name" value="Zinc finger protein 354C"/>
    <property type="match status" value="1"/>
</dbReference>
<dbReference type="FunFam" id="3.30.160.60:FF:001498">
    <property type="entry name" value="Zinc finger protein 404"/>
    <property type="match status" value="2"/>
</dbReference>
<dbReference type="FunFam" id="3.30.160.60:FF:000384">
    <property type="entry name" value="Zinc finger protein 550"/>
    <property type="match status" value="1"/>
</dbReference>
<dbReference type="FunFam" id="3.30.160.60:FF:000202">
    <property type="entry name" value="Zinc finger protein 574"/>
    <property type="match status" value="1"/>
</dbReference>
<dbReference type="FunFam" id="3.30.160.60:FF:001157">
    <property type="entry name" value="Zinc finger protein 793"/>
    <property type="match status" value="1"/>
</dbReference>
<dbReference type="Gene3D" id="6.10.140.140">
    <property type="match status" value="1"/>
</dbReference>
<dbReference type="Gene3D" id="3.30.160.60">
    <property type="entry name" value="Classic Zinc Finger"/>
    <property type="match status" value="11"/>
</dbReference>
<dbReference type="InterPro" id="IPR050752">
    <property type="entry name" value="C2H2-ZF_domain"/>
</dbReference>
<dbReference type="InterPro" id="IPR001909">
    <property type="entry name" value="KRAB"/>
</dbReference>
<dbReference type="InterPro" id="IPR036051">
    <property type="entry name" value="KRAB_dom_sf"/>
</dbReference>
<dbReference type="InterPro" id="IPR036236">
    <property type="entry name" value="Znf_C2H2_sf"/>
</dbReference>
<dbReference type="InterPro" id="IPR013087">
    <property type="entry name" value="Znf_C2H2_type"/>
</dbReference>
<dbReference type="PANTHER" id="PTHR24384">
    <property type="entry name" value="FINGER PUTATIVE TRANSCRIPTION FACTOR FAMILY-RELATED"/>
    <property type="match status" value="1"/>
</dbReference>
<dbReference type="PANTHER" id="PTHR24384:SF242">
    <property type="entry name" value="ZINC FINGER PROTEIN 628"/>
    <property type="match status" value="1"/>
</dbReference>
<dbReference type="Pfam" id="PF01352">
    <property type="entry name" value="KRAB"/>
    <property type="match status" value="1"/>
</dbReference>
<dbReference type="Pfam" id="PF00096">
    <property type="entry name" value="zf-C2H2"/>
    <property type="match status" value="11"/>
</dbReference>
<dbReference type="SMART" id="SM00349">
    <property type="entry name" value="KRAB"/>
    <property type="match status" value="1"/>
</dbReference>
<dbReference type="SMART" id="SM00355">
    <property type="entry name" value="ZnF_C2H2"/>
    <property type="match status" value="11"/>
</dbReference>
<dbReference type="SUPFAM" id="SSF57667">
    <property type="entry name" value="beta-beta-alpha zinc fingers"/>
    <property type="match status" value="7"/>
</dbReference>
<dbReference type="SUPFAM" id="SSF109640">
    <property type="entry name" value="KRAB domain (Kruppel-associated box)"/>
    <property type="match status" value="1"/>
</dbReference>
<dbReference type="PROSITE" id="PS50805">
    <property type="entry name" value="KRAB"/>
    <property type="match status" value="1"/>
</dbReference>
<dbReference type="PROSITE" id="PS00028">
    <property type="entry name" value="ZINC_FINGER_C2H2_1"/>
    <property type="match status" value="11"/>
</dbReference>
<dbReference type="PROSITE" id="PS50157">
    <property type="entry name" value="ZINC_FINGER_C2H2_2"/>
    <property type="match status" value="11"/>
</dbReference>
<proteinExistence type="evidence at protein level"/>
<sequence>MAMSQESLTFKDVFVDFTLEEWQQLDSAQKNLYRDVMLENYSHLVSVGHLVGKPDVIFRLGPGDESWMADGGTPVRTCAGEDRPEVWEVDEQIDHYKESQDKFLWQAAFIGKETLKDESGQECKICRKIIYLNTDFVSVKQRLPKYYSWERCSKHHLNFLGQNRSYVRKKDDGCKAYWKVCLHYNLHKAQPAERFFDPNQRGKALHQKQALRKSQRSQTGEKLYKCTECGKVFIQKANLVVHQRTHTGEKPYECCECAKAFSQKSTLIAHQRTHTGEKPYECSECGKTFIQKSTLIKHQRTHTGEKPFVCDKCPKAFKSSYHLIRHEKTHIRQAFYKGIKCTTSSLIYQRIHTSEKPQCSEHGKASDEKPSPTKHWRTHTKENIYECSKCGKSFRGKSHLSVHQRIHTGEKPYECSICGKTFSGKSHLSVHHRTHTGEKPYECRRCGKAFGEKSTLIVHQRMHTGEKPYKCNECGKAFSEKSPLIKHQRIHTGERPYECTDCKKAFSRKSTLIKHQRIHTGEKPYKCSECGKAFSVKSTLIVHHRTHTGEKPYECRDCGKAFSGKSTLIKHQRSHTGDKNL</sequence>
<comment type="function">
    <text>May be involved in transcriptional regulation.</text>
</comment>
<comment type="subcellular location">
    <subcellularLocation>
        <location evidence="6">Nucleus</location>
    </subcellularLocation>
</comment>
<comment type="alternative products">
    <event type="alternative splicing"/>
    <isoform>
        <id>Q2M3X9-1</id>
        <name>1</name>
        <sequence type="displayed"/>
    </isoform>
    <isoform>
        <id>Q2M3X9-2</id>
        <name>2</name>
        <sequence type="described" ref="VSP_044562"/>
    </isoform>
</comment>
<comment type="tissue specificity">
    <text evidence="4">Expressed in testis.</text>
</comment>
<comment type="developmental stage">
    <text evidence="4">Expressed in fetal brain.</text>
</comment>
<comment type="similarity">
    <text evidence="6">Belongs to the krueppel C2H2-type zinc-finger protein family.</text>
</comment>
<comment type="caution">
    <text evidence="7 8">Although ZNF674 has been reported to be involved in X-linked intellectual disability (PubMed:16385466), its pathological role is questionable (PubMed:23871722).</text>
</comment>
<feature type="chain" id="PRO_0000233995" description="Zinc finger protein 674">
    <location>
        <begin position="1"/>
        <end position="581"/>
    </location>
</feature>
<feature type="domain" description="KRAB" evidence="2">
    <location>
        <begin position="8"/>
        <end position="79"/>
    </location>
</feature>
<feature type="zinc finger region" description="C2H2-type 1" evidence="1">
    <location>
        <begin position="224"/>
        <end position="246"/>
    </location>
</feature>
<feature type="zinc finger region" description="C2H2-type 2" evidence="1">
    <location>
        <begin position="252"/>
        <end position="274"/>
    </location>
</feature>
<feature type="zinc finger region" description="C2H2-type 3" evidence="1">
    <location>
        <begin position="280"/>
        <end position="302"/>
    </location>
</feature>
<feature type="zinc finger region" description="C2H2-type 4" evidence="1">
    <location>
        <begin position="308"/>
        <end position="330"/>
    </location>
</feature>
<feature type="zinc finger region" description="C2H2-type 5" evidence="1">
    <location>
        <begin position="385"/>
        <end position="407"/>
    </location>
</feature>
<feature type="zinc finger region" description="C2H2-type 6" evidence="1">
    <location>
        <begin position="413"/>
        <end position="435"/>
    </location>
</feature>
<feature type="zinc finger region" description="C2H2-type 7" evidence="1">
    <location>
        <begin position="441"/>
        <end position="463"/>
    </location>
</feature>
<feature type="zinc finger region" description="C2H2-type 8" evidence="1">
    <location>
        <begin position="469"/>
        <end position="491"/>
    </location>
</feature>
<feature type="zinc finger region" description="C2H2-type 9" evidence="1">
    <location>
        <begin position="497"/>
        <end position="519"/>
    </location>
</feature>
<feature type="zinc finger region" description="C2H2-type 10" evidence="1">
    <location>
        <begin position="525"/>
        <end position="547"/>
    </location>
</feature>
<feature type="zinc finger region" description="C2H2-type 11" evidence="1">
    <location>
        <begin position="553"/>
        <end position="575"/>
    </location>
</feature>
<feature type="region of interest" description="Disordered" evidence="3">
    <location>
        <begin position="357"/>
        <end position="377"/>
    </location>
</feature>
<feature type="compositionally biased region" description="Basic and acidic residues" evidence="3">
    <location>
        <begin position="357"/>
        <end position="371"/>
    </location>
</feature>
<feature type="splice variant" id="VSP_044562" description="In isoform 2." evidence="5">
    <location>
        <begin position="80"/>
        <end position="85"/>
    </location>
</feature>
<feature type="sequence variant" id="VAR_046997" description="In dbSNP:rs1737367.">
    <original>L</original>
    <variation>F</variation>
    <location>
        <position position="182"/>
    </location>
</feature>
<feature type="sequence variant" id="VAR_026152" description="In dbSNP:rs61730637." evidence="4">
    <original>T</original>
    <variation>M</variation>
    <location>
        <position position="343"/>
    </location>
</feature>
<feature type="sequence variant" id="VAR_026153" description="Found in patients with X-linked intellectual disability; uncertain significance; dbSNP:rs1422964788." evidence="4">
    <original>P</original>
    <variation>L</variation>
    <location>
        <position position="412"/>
    </location>
</feature>
<feature type="sequence conflict" description="In Ref. 2; BAG58103." evidence="6" ref="2">
    <original>K</original>
    <variation>R</variation>
    <location>
        <position position="222"/>
    </location>
</feature>
<accession>Q2M3X9</accession>
<accession>B4DHE2</accession>
<accession>E9PHQ4</accession>